<reference key="1">
    <citation type="journal article" date="1995" name="Science">
        <title>Whole-genome random sequencing and assembly of Haemophilus influenzae Rd.</title>
        <authorList>
            <person name="Fleischmann R.D."/>
            <person name="Adams M.D."/>
            <person name="White O."/>
            <person name="Clayton R.A."/>
            <person name="Kirkness E.F."/>
            <person name="Kerlavage A.R."/>
            <person name="Bult C.J."/>
            <person name="Tomb J.-F."/>
            <person name="Dougherty B.A."/>
            <person name="Merrick J.M."/>
            <person name="McKenney K."/>
            <person name="Sutton G.G."/>
            <person name="FitzHugh W."/>
            <person name="Fields C.A."/>
            <person name="Gocayne J.D."/>
            <person name="Scott J.D."/>
            <person name="Shirley R."/>
            <person name="Liu L.-I."/>
            <person name="Glodek A."/>
            <person name="Kelley J.M."/>
            <person name="Weidman J.F."/>
            <person name="Phillips C.A."/>
            <person name="Spriggs T."/>
            <person name="Hedblom E."/>
            <person name="Cotton M.D."/>
            <person name="Utterback T.R."/>
            <person name="Hanna M.C."/>
            <person name="Nguyen D.T."/>
            <person name="Saudek D.M."/>
            <person name="Brandon R.C."/>
            <person name="Fine L.D."/>
            <person name="Fritchman J.L."/>
            <person name="Fuhrmann J.L."/>
            <person name="Geoghagen N.S.M."/>
            <person name="Gnehm C.L."/>
            <person name="McDonald L.A."/>
            <person name="Small K.V."/>
            <person name="Fraser C.M."/>
            <person name="Smith H.O."/>
            <person name="Venter J.C."/>
        </authorList>
    </citation>
    <scope>NUCLEOTIDE SEQUENCE [LARGE SCALE GENOMIC DNA]</scope>
    <source>
        <strain>ATCC 51907 / DSM 11121 / KW20 / Rd</strain>
    </source>
</reference>
<proteinExistence type="inferred from homology"/>
<evidence type="ECO:0000255" key="1">
    <source>
        <dbReference type="HAMAP-Rule" id="MF_00772"/>
    </source>
</evidence>
<evidence type="ECO:0000305" key="2"/>
<sequence>MTALYYTYYPSPVGRLLILSDGESITHIDFEKEQYAPNPKWHKQDELPVFQKVRLAFERYFNGEVECFSNIPLKPEGTAFQQAIWQALREIDYGELSTYGELALRINNPKAVRAVGGAVGSNPISIIIPCHRILGKDRTLTGFGGGLEAKRFLLQLEKIPYIDKGTENTKPRFFKKYHE</sequence>
<keyword id="KW-0963">Cytoplasm</keyword>
<keyword id="KW-0227">DNA damage</keyword>
<keyword id="KW-0234">DNA repair</keyword>
<keyword id="KW-0489">Methyltransferase</keyword>
<keyword id="KW-1185">Reference proteome</keyword>
<keyword id="KW-0808">Transferase</keyword>
<name>OGT_HAEIN</name>
<organism>
    <name type="scientific">Haemophilus influenzae (strain ATCC 51907 / DSM 11121 / KW20 / Rd)</name>
    <dbReference type="NCBI Taxonomy" id="71421"/>
    <lineage>
        <taxon>Bacteria</taxon>
        <taxon>Pseudomonadati</taxon>
        <taxon>Pseudomonadota</taxon>
        <taxon>Gammaproteobacteria</taxon>
        <taxon>Pasteurellales</taxon>
        <taxon>Pasteurellaceae</taxon>
        <taxon>Haemophilus</taxon>
    </lineage>
</organism>
<dbReference type="EC" id="2.1.1.63" evidence="1"/>
<dbReference type="EMBL" id="L42023">
    <property type="protein sequence ID" value="AAC22061.1"/>
    <property type="status" value="ALT_INIT"/>
    <property type="molecule type" value="Genomic_DNA"/>
</dbReference>
<dbReference type="PIR" id="G64065">
    <property type="entry name" value="G64065"/>
</dbReference>
<dbReference type="RefSeq" id="NP_438564.1">
    <property type="nucleotide sequence ID" value="NC_000907.1"/>
</dbReference>
<dbReference type="SMR" id="P44687"/>
<dbReference type="STRING" id="71421.HI_0402"/>
<dbReference type="EnsemblBacteria" id="AAC22061">
    <property type="protein sequence ID" value="AAC22061"/>
    <property type="gene ID" value="HI_0402"/>
</dbReference>
<dbReference type="KEGG" id="hin:HI_0402"/>
<dbReference type="PATRIC" id="fig|71421.8.peg.421"/>
<dbReference type="eggNOG" id="COG0350">
    <property type="taxonomic scope" value="Bacteria"/>
</dbReference>
<dbReference type="HOGENOM" id="CLU_000445_52_2_6"/>
<dbReference type="OrthoDB" id="9811249at2"/>
<dbReference type="PhylomeDB" id="P44687"/>
<dbReference type="Proteomes" id="UP000000579">
    <property type="component" value="Chromosome"/>
</dbReference>
<dbReference type="GO" id="GO:0005737">
    <property type="term" value="C:cytoplasm"/>
    <property type="evidence" value="ECO:0007669"/>
    <property type="project" value="UniProtKB-SubCell"/>
</dbReference>
<dbReference type="GO" id="GO:0003908">
    <property type="term" value="F:methylated-DNA-[protein]-cysteine S-methyltransferase activity"/>
    <property type="evidence" value="ECO:0007669"/>
    <property type="project" value="UniProtKB-UniRule"/>
</dbReference>
<dbReference type="GO" id="GO:0006307">
    <property type="term" value="P:DNA alkylation repair"/>
    <property type="evidence" value="ECO:0007669"/>
    <property type="project" value="UniProtKB-UniRule"/>
</dbReference>
<dbReference type="GO" id="GO:0032259">
    <property type="term" value="P:methylation"/>
    <property type="evidence" value="ECO:0007669"/>
    <property type="project" value="UniProtKB-KW"/>
</dbReference>
<dbReference type="CDD" id="cd06445">
    <property type="entry name" value="ATase"/>
    <property type="match status" value="1"/>
</dbReference>
<dbReference type="FunFam" id="1.10.10.10:FF:000214">
    <property type="entry name" value="Methylated-DNA--protein-cysteine methyltransferase"/>
    <property type="match status" value="1"/>
</dbReference>
<dbReference type="Gene3D" id="3.30.160.70">
    <property type="entry name" value="Methylated DNA-protein cysteine methyltransferase domain"/>
    <property type="match status" value="1"/>
</dbReference>
<dbReference type="Gene3D" id="1.10.10.10">
    <property type="entry name" value="Winged helix-like DNA-binding domain superfamily/Winged helix DNA-binding domain"/>
    <property type="match status" value="1"/>
</dbReference>
<dbReference type="HAMAP" id="MF_00772">
    <property type="entry name" value="OGT"/>
    <property type="match status" value="1"/>
</dbReference>
<dbReference type="InterPro" id="IPR001497">
    <property type="entry name" value="MethylDNA_cys_MeTrfase_AS"/>
</dbReference>
<dbReference type="InterPro" id="IPR014048">
    <property type="entry name" value="MethylDNA_cys_MeTrfase_DNA-bd"/>
</dbReference>
<dbReference type="InterPro" id="IPR036217">
    <property type="entry name" value="MethylDNA_cys_MeTrfase_DNAb"/>
</dbReference>
<dbReference type="InterPro" id="IPR008332">
    <property type="entry name" value="MethylG_MeTrfase_N"/>
</dbReference>
<dbReference type="InterPro" id="IPR023546">
    <property type="entry name" value="MGMT"/>
</dbReference>
<dbReference type="InterPro" id="IPR036631">
    <property type="entry name" value="MGMT_N_sf"/>
</dbReference>
<dbReference type="InterPro" id="IPR036388">
    <property type="entry name" value="WH-like_DNA-bd_sf"/>
</dbReference>
<dbReference type="NCBIfam" id="TIGR00589">
    <property type="entry name" value="ogt"/>
    <property type="match status" value="1"/>
</dbReference>
<dbReference type="PANTHER" id="PTHR10815">
    <property type="entry name" value="METHYLATED-DNA--PROTEIN-CYSTEINE METHYLTRANSFERASE"/>
    <property type="match status" value="1"/>
</dbReference>
<dbReference type="PANTHER" id="PTHR10815:SF5">
    <property type="entry name" value="METHYLATED-DNA--PROTEIN-CYSTEINE METHYLTRANSFERASE"/>
    <property type="match status" value="1"/>
</dbReference>
<dbReference type="Pfam" id="PF01035">
    <property type="entry name" value="DNA_binding_1"/>
    <property type="match status" value="1"/>
</dbReference>
<dbReference type="Pfam" id="PF02870">
    <property type="entry name" value="Methyltransf_1N"/>
    <property type="match status" value="1"/>
</dbReference>
<dbReference type="SUPFAM" id="SSF53155">
    <property type="entry name" value="Methylated DNA-protein cysteine methyltransferase domain"/>
    <property type="match status" value="1"/>
</dbReference>
<dbReference type="SUPFAM" id="SSF46767">
    <property type="entry name" value="Methylated DNA-protein cysteine methyltransferase, C-terminal domain"/>
    <property type="match status" value="1"/>
</dbReference>
<dbReference type="PROSITE" id="PS00374">
    <property type="entry name" value="MGMT"/>
    <property type="match status" value="1"/>
</dbReference>
<accession>P44687</accession>
<comment type="function">
    <text evidence="1">Involved in the cellular defense against the biological effects of O6-methylguanine (O6-MeG) and O4-methylthymine (O4-MeT) in DNA. Repairs the methylated nucleobase in DNA by stoichiometrically transferring the methyl group to a cysteine residue in the enzyme. This is a suicide reaction: the enzyme is irreversibly inactivated.</text>
</comment>
<comment type="catalytic activity">
    <reaction evidence="1">
        <text>a 6-O-methyl-2'-deoxyguanosine in DNA + L-cysteinyl-[protein] = S-methyl-L-cysteinyl-[protein] + a 2'-deoxyguanosine in DNA</text>
        <dbReference type="Rhea" id="RHEA:24000"/>
        <dbReference type="Rhea" id="RHEA-COMP:10131"/>
        <dbReference type="Rhea" id="RHEA-COMP:10132"/>
        <dbReference type="Rhea" id="RHEA-COMP:11367"/>
        <dbReference type="Rhea" id="RHEA-COMP:11368"/>
        <dbReference type="ChEBI" id="CHEBI:29950"/>
        <dbReference type="ChEBI" id="CHEBI:82612"/>
        <dbReference type="ChEBI" id="CHEBI:85445"/>
        <dbReference type="ChEBI" id="CHEBI:85448"/>
        <dbReference type="EC" id="2.1.1.63"/>
    </reaction>
</comment>
<comment type="catalytic activity">
    <reaction evidence="1">
        <text>a 4-O-methyl-thymidine in DNA + L-cysteinyl-[protein] = a thymidine in DNA + S-methyl-L-cysteinyl-[protein]</text>
        <dbReference type="Rhea" id="RHEA:53428"/>
        <dbReference type="Rhea" id="RHEA-COMP:10131"/>
        <dbReference type="Rhea" id="RHEA-COMP:10132"/>
        <dbReference type="Rhea" id="RHEA-COMP:13555"/>
        <dbReference type="Rhea" id="RHEA-COMP:13556"/>
        <dbReference type="ChEBI" id="CHEBI:29950"/>
        <dbReference type="ChEBI" id="CHEBI:82612"/>
        <dbReference type="ChEBI" id="CHEBI:137386"/>
        <dbReference type="ChEBI" id="CHEBI:137387"/>
        <dbReference type="EC" id="2.1.1.63"/>
    </reaction>
</comment>
<comment type="subcellular location">
    <subcellularLocation>
        <location evidence="1">Cytoplasm</location>
    </subcellularLocation>
</comment>
<comment type="miscellaneous">
    <text>This enzyme catalyzes only one turnover and therefore is not strictly catalytic. According to one definition, an enzyme is a biocatalyst that acts repeatedly and over many reaction cycles.</text>
</comment>
<comment type="similarity">
    <text evidence="1">Belongs to the MGMT family.</text>
</comment>
<comment type="sequence caution" evidence="2">
    <conflict type="erroneous initiation">
        <sequence resource="EMBL-CDS" id="AAC22061"/>
    </conflict>
</comment>
<protein>
    <recommendedName>
        <fullName evidence="1">Methylated-DNA--protein-cysteine methyltransferase</fullName>
        <ecNumber evidence="1">2.1.1.63</ecNumber>
    </recommendedName>
    <alternativeName>
        <fullName evidence="1">6-O-methylguanine-DNA methyltransferase</fullName>
        <shortName evidence="1">MGMT</shortName>
    </alternativeName>
    <alternativeName>
        <fullName evidence="1">O-6-methylguanine-DNA-alkyltransferase</fullName>
    </alternativeName>
</protein>
<gene>
    <name evidence="1" type="primary">ogt</name>
    <name type="synonym">dat1</name>
    <name type="ordered locus">HI_0402</name>
</gene>
<feature type="chain" id="PRO_0000139366" description="Methylated-DNA--protein-cysteine methyltransferase">
    <location>
        <begin position="1"/>
        <end position="179"/>
    </location>
</feature>
<feature type="active site" description="Nucleophile; methyl group acceptor" evidence="1">
    <location>
        <position position="130"/>
    </location>
</feature>